<proteinExistence type="inferred from homology"/>
<organism>
    <name type="scientific">Prochlorococcus marinus (strain MIT 9313)</name>
    <dbReference type="NCBI Taxonomy" id="74547"/>
    <lineage>
        <taxon>Bacteria</taxon>
        <taxon>Bacillati</taxon>
        <taxon>Cyanobacteriota</taxon>
        <taxon>Cyanophyceae</taxon>
        <taxon>Synechococcales</taxon>
        <taxon>Prochlorococcaceae</taxon>
        <taxon>Prochlorococcus</taxon>
    </lineage>
</organism>
<name>RL5_PROMM</name>
<dbReference type="EMBL" id="BX548175">
    <property type="protein sequence ID" value="CAE21919.1"/>
    <property type="molecule type" value="Genomic_DNA"/>
</dbReference>
<dbReference type="RefSeq" id="WP_011131111.1">
    <property type="nucleotide sequence ID" value="NC_005071.1"/>
</dbReference>
<dbReference type="SMR" id="Q7V533"/>
<dbReference type="KEGG" id="pmt:PMT_1744"/>
<dbReference type="eggNOG" id="COG0094">
    <property type="taxonomic scope" value="Bacteria"/>
</dbReference>
<dbReference type="HOGENOM" id="CLU_061015_2_1_3"/>
<dbReference type="OrthoDB" id="9806626at2"/>
<dbReference type="Proteomes" id="UP000001423">
    <property type="component" value="Chromosome"/>
</dbReference>
<dbReference type="GO" id="GO:1990904">
    <property type="term" value="C:ribonucleoprotein complex"/>
    <property type="evidence" value="ECO:0007669"/>
    <property type="project" value="UniProtKB-KW"/>
</dbReference>
<dbReference type="GO" id="GO:0005840">
    <property type="term" value="C:ribosome"/>
    <property type="evidence" value="ECO:0007669"/>
    <property type="project" value="UniProtKB-KW"/>
</dbReference>
<dbReference type="GO" id="GO:0019843">
    <property type="term" value="F:rRNA binding"/>
    <property type="evidence" value="ECO:0007669"/>
    <property type="project" value="UniProtKB-UniRule"/>
</dbReference>
<dbReference type="GO" id="GO:0003735">
    <property type="term" value="F:structural constituent of ribosome"/>
    <property type="evidence" value="ECO:0007669"/>
    <property type="project" value="InterPro"/>
</dbReference>
<dbReference type="GO" id="GO:0000049">
    <property type="term" value="F:tRNA binding"/>
    <property type="evidence" value="ECO:0007669"/>
    <property type="project" value="UniProtKB-UniRule"/>
</dbReference>
<dbReference type="GO" id="GO:0006412">
    <property type="term" value="P:translation"/>
    <property type="evidence" value="ECO:0007669"/>
    <property type="project" value="UniProtKB-UniRule"/>
</dbReference>
<dbReference type="FunFam" id="3.30.1440.10:FF:000001">
    <property type="entry name" value="50S ribosomal protein L5"/>
    <property type="match status" value="1"/>
</dbReference>
<dbReference type="Gene3D" id="3.30.1440.10">
    <property type="match status" value="1"/>
</dbReference>
<dbReference type="HAMAP" id="MF_01333_B">
    <property type="entry name" value="Ribosomal_uL5_B"/>
    <property type="match status" value="1"/>
</dbReference>
<dbReference type="InterPro" id="IPR002132">
    <property type="entry name" value="Ribosomal_uL5"/>
</dbReference>
<dbReference type="InterPro" id="IPR020930">
    <property type="entry name" value="Ribosomal_uL5_bac-type"/>
</dbReference>
<dbReference type="InterPro" id="IPR031309">
    <property type="entry name" value="Ribosomal_uL5_C"/>
</dbReference>
<dbReference type="InterPro" id="IPR020929">
    <property type="entry name" value="Ribosomal_uL5_CS"/>
</dbReference>
<dbReference type="InterPro" id="IPR022803">
    <property type="entry name" value="Ribosomal_uL5_dom_sf"/>
</dbReference>
<dbReference type="InterPro" id="IPR031310">
    <property type="entry name" value="Ribosomal_uL5_N"/>
</dbReference>
<dbReference type="NCBIfam" id="NF000585">
    <property type="entry name" value="PRK00010.1"/>
    <property type="match status" value="1"/>
</dbReference>
<dbReference type="PANTHER" id="PTHR11994">
    <property type="entry name" value="60S RIBOSOMAL PROTEIN L11-RELATED"/>
    <property type="match status" value="1"/>
</dbReference>
<dbReference type="Pfam" id="PF00281">
    <property type="entry name" value="Ribosomal_L5"/>
    <property type="match status" value="1"/>
</dbReference>
<dbReference type="Pfam" id="PF00673">
    <property type="entry name" value="Ribosomal_L5_C"/>
    <property type="match status" value="1"/>
</dbReference>
<dbReference type="PIRSF" id="PIRSF002161">
    <property type="entry name" value="Ribosomal_L5"/>
    <property type="match status" value="1"/>
</dbReference>
<dbReference type="SUPFAM" id="SSF55282">
    <property type="entry name" value="RL5-like"/>
    <property type="match status" value="1"/>
</dbReference>
<dbReference type="PROSITE" id="PS00358">
    <property type="entry name" value="RIBOSOMAL_L5"/>
    <property type="match status" value="1"/>
</dbReference>
<keyword id="KW-1185">Reference proteome</keyword>
<keyword id="KW-0687">Ribonucleoprotein</keyword>
<keyword id="KW-0689">Ribosomal protein</keyword>
<keyword id="KW-0694">RNA-binding</keyword>
<keyword id="KW-0699">rRNA-binding</keyword>
<keyword id="KW-0820">tRNA-binding</keyword>
<protein>
    <recommendedName>
        <fullName evidence="1">Large ribosomal subunit protein uL5</fullName>
    </recommendedName>
    <alternativeName>
        <fullName evidence="2">50S ribosomal protein L5</fullName>
    </alternativeName>
</protein>
<reference key="1">
    <citation type="journal article" date="2003" name="Nature">
        <title>Genome divergence in two Prochlorococcus ecotypes reflects oceanic niche differentiation.</title>
        <authorList>
            <person name="Rocap G."/>
            <person name="Larimer F.W."/>
            <person name="Lamerdin J.E."/>
            <person name="Malfatti S."/>
            <person name="Chain P."/>
            <person name="Ahlgren N.A."/>
            <person name="Arellano A."/>
            <person name="Coleman M."/>
            <person name="Hauser L."/>
            <person name="Hess W.R."/>
            <person name="Johnson Z.I."/>
            <person name="Land M.L."/>
            <person name="Lindell D."/>
            <person name="Post A.F."/>
            <person name="Regala W."/>
            <person name="Shah M."/>
            <person name="Shaw S.L."/>
            <person name="Steglich C."/>
            <person name="Sullivan M.B."/>
            <person name="Ting C.S."/>
            <person name="Tolonen A."/>
            <person name="Webb E.A."/>
            <person name="Zinser E.R."/>
            <person name="Chisholm S.W."/>
        </authorList>
    </citation>
    <scope>NUCLEOTIDE SEQUENCE [LARGE SCALE GENOMIC DNA]</scope>
    <source>
        <strain>MIT 9313</strain>
    </source>
</reference>
<evidence type="ECO:0000255" key="1">
    <source>
        <dbReference type="HAMAP-Rule" id="MF_01333"/>
    </source>
</evidence>
<evidence type="ECO:0000305" key="2"/>
<feature type="chain" id="PRO_0000124967" description="Large ribosomal subunit protein uL5">
    <location>
        <begin position="1"/>
        <end position="179"/>
    </location>
</feature>
<accession>Q7V533</accession>
<comment type="function">
    <text evidence="1">This is one of the proteins that bind and probably mediate the attachment of the 5S RNA into the large ribosomal subunit, where it forms part of the central protuberance. In the 70S ribosome it contacts protein S13 of the 30S subunit (bridge B1b), connecting the 2 subunits; this bridge is implicated in subunit movement. Contacts the P site tRNA; the 5S rRNA and some of its associated proteins might help stabilize positioning of ribosome-bound tRNAs.</text>
</comment>
<comment type="subunit">
    <text evidence="1">Part of the 50S ribosomal subunit; part of the 5S rRNA/L5/L18/L25 subcomplex. Contacts the 5S rRNA and the P site tRNA. Forms a bridge to the 30S subunit in the 70S ribosome.</text>
</comment>
<comment type="similarity">
    <text evidence="1">Belongs to the universal ribosomal protein uL5 family.</text>
</comment>
<gene>
    <name evidence="1" type="primary">rplE</name>
    <name evidence="1" type="synonym">rpl5</name>
    <name type="ordered locus">PMT_1744</name>
</gene>
<sequence>MSLKQRYRETIQPKLLKDLSLSNIHEVPKVLKITVNRGLGEAAQNAKSLEASITELATITGQKVVVTRAKKAIAGFKIRQGMPIGCAVTLRGERMYAFLERLINLALPRIRDFRGVSPKSFDGRGNYTLGVREQLIFPEISFDKIDAIRGMDITIVTSARTDEEGQSLLREMGMPFRSN</sequence>